<sequence length="404" mass="43670">MQVSIACTEQNLRSRSSEDRLCGPRPGPGGGNGGPAGGGHGNPPGGGGSGPKARAALVPRPPAPAGALRESTGRGTGMKYRNLGKSGLRVSCLGLGTWVTFGSQISDETAEDVLTVAYEHGVNLFDTAEVYAAGKAERTLGNILKSKGWRRSSYVITTKIFWGGQAETERGLSRKHIIEGLRGSLERLQLGYVDIVFANRSDPNCPMEEIVRAMTYVINQGLALYWGTSRWGAAEIMEAYSMARQFNLIPPVCEQAEHHLFQREKVEMQLPELYHKIGVGSVTWYPLACGLITSKYDGRVPDTCRASIKGYQWLKDKVQSEDGKKQQAKVMDLLPVAHQLGCTVAQLAIAWCLRSEGVSSVLLGVSSAEQLIEHLGALQVLSQLTPQTVMEIDGLLGNKPHSKK</sequence>
<reference key="1">
    <citation type="journal article" date="1998" name="J. Biol. Chem.">
        <title>Coexpression of the KCNA3B gene product with Kv1.5 leads to a novel A-type potassium channel.</title>
        <authorList>
            <person name="Leicher T."/>
            <person name="Baehring R."/>
            <person name="Isbrandt D."/>
            <person name="Pongs O."/>
        </authorList>
    </citation>
    <scope>NUCLEOTIDE SEQUENCE [MRNA]</scope>
    <scope>FUNCTION</scope>
    <scope>TISSUE SPECIFICITY</scope>
    <source>
        <tissue>Brain</tissue>
    </source>
</reference>
<reference key="2">
    <citation type="journal article" date="2004" name="Genome Res.">
        <title>The status, quality, and expansion of the NIH full-length cDNA project: the Mammalian Gene Collection (MGC).</title>
        <authorList>
            <consortium name="The MGC Project Team"/>
        </authorList>
    </citation>
    <scope>NUCLEOTIDE SEQUENCE [LARGE SCALE MRNA]</scope>
</reference>
<gene>
    <name evidence="8" type="primary">KCNAB3</name>
    <name type="synonym">KCNA3B</name>
</gene>
<feature type="chain" id="PRO_0000148750" description="Voltage-gated potassium channel subunit beta-3">
    <location>
        <begin position="1"/>
        <end position="404"/>
    </location>
</feature>
<feature type="region of interest" description="Disordered" evidence="5">
    <location>
        <begin position="1"/>
        <end position="77"/>
    </location>
</feature>
<feature type="compositionally biased region" description="Polar residues" evidence="5">
    <location>
        <begin position="1"/>
        <end position="14"/>
    </location>
</feature>
<feature type="compositionally biased region" description="Gly residues" evidence="5">
    <location>
        <begin position="28"/>
        <end position="50"/>
    </location>
</feature>
<feature type="active site" description="Proton donor/acceptor" evidence="1">
    <location>
        <position position="131"/>
    </location>
</feature>
<feature type="binding site" evidence="1">
    <location>
        <position position="97"/>
    </location>
    <ligand>
        <name>NADP(+)</name>
        <dbReference type="ChEBI" id="CHEBI:58349"/>
    </ligand>
</feature>
<feature type="binding site" evidence="1">
    <location>
        <position position="98"/>
    </location>
    <ligand>
        <name>NADP(+)</name>
        <dbReference type="ChEBI" id="CHEBI:58349"/>
    </ligand>
</feature>
<feature type="binding site" evidence="1">
    <location>
        <position position="104"/>
    </location>
    <ligand>
        <name>NADP(+)</name>
        <dbReference type="ChEBI" id="CHEBI:58349"/>
    </ligand>
</feature>
<feature type="binding site" evidence="1">
    <location>
        <position position="126"/>
    </location>
    <ligand>
        <name>NADP(+)</name>
        <dbReference type="ChEBI" id="CHEBI:58349"/>
    </ligand>
</feature>
<feature type="binding site" evidence="1">
    <location>
        <position position="199"/>
    </location>
    <ligand>
        <name>NADP(+)</name>
        <dbReference type="ChEBI" id="CHEBI:58349"/>
    </ligand>
</feature>
<feature type="binding site" evidence="1">
    <location>
        <position position="229"/>
    </location>
    <ligand>
        <name>NADP(+)</name>
        <dbReference type="ChEBI" id="CHEBI:58349"/>
    </ligand>
</feature>
<feature type="binding site" evidence="1">
    <location>
        <position position="230"/>
    </location>
    <ligand>
        <name>NADP(+)</name>
        <dbReference type="ChEBI" id="CHEBI:58349"/>
    </ligand>
</feature>
<feature type="binding site" evidence="1">
    <location>
        <position position="255"/>
    </location>
    <ligand>
        <name>NADP(+)</name>
        <dbReference type="ChEBI" id="CHEBI:58349"/>
    </ligand>
</feature>
<feature type="binding site" evidence="1">
    <location>
        <position position="284"/>
    </location>
    <ligand>
        <name>NADP(+)</name>
        <dbReference type="ChEBI" id="CHEBI:58349"/>
    </ligand>
</feature>
<feature type="binding site" evidence="1">
    <location>
        <position position="286"/>
    </location>
    <ligand>
        <name>NADP(+)</name>
        <dbReference type="ChEBI" id="CHEBI:58349"/>
    </ligand>
</feature>
<feature type="binding site" evidence="1">
    <location>
        <position position="287"/>
    </location>
    <ligand>
        <name>NADP(+)</name>
        <dbReference type="ChEBI" id="CHEBI:58349"/>
    </ligand>
</feature>
<feature type="binding site" evidence="1">
    <location>
        <position position="288"/>
    </location>
    <ligand>
        <name>NADP(+)</name>
        <dbReference type="ChEBI" id="CHEBI:58349"/>
    </ligand>
</feature>
<feature type="binding site" evidence="1">
    <location>
        <position position="289"/>
    </location>
    <ligand>
        <name>NADP(+)</name>
        <dbReference type="ChEBI" id="CHEBI:58349"/>
    </ligand>
</feature>
<feature type="binding site" evidence="1">
    <location>
        <position position="295"/>
    </location>
    <ligand>
        <name>NADP(+)</name>
        <dbReference type="ChEBI" id="CHEBI:58349"/>
    </ligand>
</feature>
<feature type="binding site" evidence="1">
    <location>
        <position position="305"/>
    </location>
    <ligand>
        <name>NADP(+)</name>
        <dbReference type="ChEBI" id="CHEBI:58349"/>
    </ligand>
</feature>
<feature type="binding site" evidence="1">
    <location>
        <position position="364"/>
    </location>
    <ligand>
        <name>NADP(+)</name>
        <dbReference type="ChEBI" id="CHEBI:58349"/>
    </ligand>
</feature>
<feature type="binding site" evidence="1">
    <location>
        <position position="366"/>
    </location>
    <ligand>
        <name>NADP(+)</name>
        <dbReference type="ChEBI" id="CHEBI:58349"/>
    </ligand>
</feature>
<feature type="binding site" evidence="1">
    <location>
        <position position="370"/>
    </location>
    <ligand>
        <name>NADP(+)</name>
        <dbReference type="ChEBI" id="CHEBI:58349"/>
    </ligand>
</feature>
<feature type="binding site" evidence="1">
    <location>
        <position position="373"/>
    </location>
    <ligand>
        <name>NADP(+)</name>
        <dbReference type="ChEBI" id="CHEBI:58349"/>
    </ligand>
</feature>
<feature type="sequence conflict" description="In Ref. 1; AAB92499." evidence="7" ref="1">
    <original>L</original>
    <variation>V</variation>
    <location>
        <position position="57"/>
    </location>
</feature>
<feature type="sequence conflict" description="In Ref. 1; AAB92499." evidence="7" ref="1">
    <original>R</original>
    <variation>G</variation>
    <location>
        <position position="60"/>
    </location>
</feature>
<feature type="sequence conflict" description="In Ref. 1; AAB92499." evidence="7" ref="1">
    <original>A</original>
    <variation>G</variation>
    <location>
        <position position="65"/>
    </location>
</feature>
<feature type="sequence conflict" description="In Ref. 1; AAB92499." evidence="7" ref="1">
    <original>L</original>
    <variation>V</variation>
    <location>
        <position position="68"/>
    </location>
</feature>
<feature type="sequence conflict" description="In Ref. 1; AAB92499." evidence="7" ref="1">
    <original>SGL</original>
    <variation>CGV</variation>
    <location>
        <begin position="86"/>
        <end position="88"/>
    </location>
</feature>
<protein>
    <recommendedName>
        <fullName>Voltage-gated potassium channel subunit beta-3</fullName>
        <ecNumber evidence="1">1.1.1.-</ecNumber>
    </recommendedName>
    <alternativeName>
        <fullName>K(+) channel subunit beta-3</fullName>
    </alternativeName>
    <alternativeName>
        <fullName>Kv-beta-3</fullName>
    </alternativeName>
</protein>
<proteinExistence type="evidence at protein level"/>
<dbReference type="EC" id="1.1.1.-" evidence="1"/>
<dbReference type="EMBL" id="AF016411">
    <property type="protein sequence ID" value="AAB92499.1"/>
    <property type="molecule type" value="mRNA"/>
</dbReference>
<dbReference type="EMBL" id="BC096232">
    <property type="protein sequence ID" value="AAH96232.1"/>
    <property type="molecule type" value="mRNA"/>
</dbReference>
<dbReference type="EMBL" id="BC096234">
    <property type="protein sequence ID" value="AAH96234.1"/>
    <property type="molecule type" value="mRNA"/>
</dbReference>
<dbReference type="EMBL" id="BC099634">
    <property type="protein sequence ID" value="AAH99634.1"/>
    <property type="molecule type" value="mRNA"/>
</dbReference>
<dbReference type="CCDS" id="CCDS11124.1"/>
<dbReference type="RefSeq" id="NP_004723.2">
    <property type="nucleotide sequence ID" value="NM_004732.3"/>
</dbReference>
<dbReference type="SMR" id="O43448"/>
<dbReference type="BioGRID" id="114631">
    <property type="interactions" value="10"/>
</dbReference>
<dbReference type="FunCoup" id="O43448">
    <property type="interactions" value="124"/>
</dbReference>
<dbReference type="IntAct" id="O43448">
    <property type="interactions" value="7"/>
</dbReference>
<dbReference type="STRING" id="9606.ENSP00000302719"/>
<dbReference type="GlyGen" id="O43448">
    <property type="glycosylation" value="1 site, 1 O-linked glycan (1 site)"/>
</dbReference>
<dbReference type="iPTMnet" id="O43448"/>
<dbReference type="PhosphoSitePlus" id="O43448"/>
<dbReference type="BioMuta" id="KCNAB3"/>
<dbReference type="jPOST" id="O43448"/>
<dbReference type="MassIVE" id="O43448"/>
<dbReference type="PaxDb" id="9606-ENSP00000302719"/>
<dbReference type="PeptideAtlas" id="O43448"/>
<dbReference type="ProteomicsDB" id="48954"/>
<dbReference type="ABCD" id="O43448">
    <property type="antibodies" value="1 sequenced antibody"/>
</dbReference>
<dbReference type="Antibodypedia" id="12312">
    <property type="antibodies" value="149 antibodies from 24 providers"/>
</dbReference>
<dbReference type="DNASU" id="9196"/>
<dbReference type="Ensembl" id="ENST00000303790.3">
    <property type="protein sequence ID" value="ENSP00000302719.2"/>
    <property type="gene ID" value="ENSG00000170049.10"/>
</dbReference>
<dbReference type="GeneID" id="9196"/>
<dbReference type="KEGG" id="hsa:9196"/>
<dbReference type="MANE-Select" id="ENST00000303790.3">
    <property type="protein sequence ID" value="ENSP00000302719.2"/>
    <property type="RefSeq nucleotide sequence ID" value="NM_004732.4"/>
    <property type="RefSeq protein sequence ID" value="NP_004723.2"/>
</dbReference>
<dbReference type="UCSC" id="uc002gjm.2">
    <property type="organism name" value="human"/>
</dbReference>
<dbReference type="AGR" id="HGNC:6230"/>
<dbReference type="CTD" id="9196"/>
<dbReference type="DisGeNET" id="9196"/>
<dbReference type="GeneCards" id="KCNAB3"/>
<dbReference type="HGNC" id="HGNC:6230">
    <property type="gene designation" value="KCNAB3"/>
</dbReference>
<dbReference type="HPA" id="ENSG00000170049">
    <property type="expression patterns" value="Group enriched (brain, endometrium, retina)"/>
</dbReference>
<dbReference type="MIM" id="604111">
    <property type="type" value="gene"/>
</dbReference>
<dbReference type="neXtProt" id="NX_O43448"/>
<dbReference type="OpenTargets" id="ENSG00000170049"/>
<dbReference type="PharmGKB" id="PA30024"/>
<dbReference type="VEuPathDB" id="HostDB:ENSG00000170049"/>
<dbReference type="eggNOG" id="KOG1575">
    <property type="taxonomic scope" value="Eukaryota"/>
</dbReference>
<dbReference type="GeneTree" id="ENSGT00940000159306"/>
<dbReference type="HOGENOM" id="CLU_023205_2_0_1"/>
<dbReference type="InParanoid" id="O43448"/>
<dbReference type="OMA" id="EQPAYNM"/>
<dbReference type="OrthoDB" id="1720422at2759"/>
<dbReference type="PAN-GO" id="O43448">
    <property type="GO annotations" value="5 GO annotations based on evolutionary models"/>
</dbReference>
<dbReference type="PhylomeDB" id="O43448"/>
<dbReference type="TreeFam" id="TF324563"/>
<dbReference type="PathwayCommons" id="O43448"/>
<dbReference type="Reactome" id="R-HSA-1296072">
    <property type="pathway name" value="Voltage gated Potassium channels"/>
</dbReference>
<dbReference type="SignaLink" id="O43448"/>
<dbReference type="BioGRID-ORCS" id="9196">
    <property type="hits" value="8 hits in 1150 CRISPR screens"/>
</dbReference>
<dbReference type="ChiTaRS" id="KCNAB3">
    <property type="organism name" value="human"/>
</dbReference>
<dbReference type="GeneWiki" id="KCNAB3"/>
<dbReference type="GenomeRNAi" id="9196"/>
<dbReference type="Pharos" id="O43448">
    <property type="development level" value="Tbio"/>
</dbReference>
<dbReference type="PRO" id="PR:O43448"/>
<dbReference type="Proteomes" id="UP000005640">
    <property type="component" value="Chromosome 17"/>
</dbReference>
<dbReference type="RNAct" id="O43448">
    <property type="molecule type" value="protein"/>
</dbReference>
<dbReference type="Bgee" id="ENSG00000170049">
    <property type="expression patterns" value="Expressed in right hemisphere of cerebellum and 94 other cell types or tissues"/>
</dbReference>
<dbReference type="ExpressionAtlas" id="O43448">
    <property type="expression patterns" value="baseline and differential"/>
</dbReference>
<dbReference type="GO" id="GO:0005737">
    <property type="term" value="C:cytoplasm"/>
    <property type="evidence" value="ECO:0007669"/>
    <property type="project" value="UniProtKB-SubCell"/>
</dbReference>
<dbReference type="GO" id="GO:0005886">
    <property type="term" value="C:plasma membrane"/>
    <property type="evidence" value="ECO:0000304"/>
    <property type="project" value="Reactome"/>
</dbReference>
<dbReference type="GO" id="GO:0008076">
    <property type="term" value="C:voltage-gated potassium channel complex"/>
    <property type="evidence" value="ECO:0000318"/>
    <property type="project" value="GO_Central"/>
</dbReference>
<dbReference type="GO" id="GO:0004033">
    <property type="term" value="F:aldo-keto reductase (NADPH) activity"/>
    <property type="evidence" value="ECO:0000318"/>
    <property type="project" value="GO_Central"/>
</dbReference>
<dbReference type="GO" id="GO:0015459">
    <property type="term" value="F:potassium channel regulator activity"/>
    <property type="evidence" value="ECO:0000318"/>
    <property type="project" value="GO_Central"/>
</dbReference>
<dbReference type="GO" id="GO:0044325">
    <property type="term" value="F:transmembrane transporter binding"/>
    <property type="evidence" value="ECO:0000318"/>
    <property type="project" value="GO_Central"/>
</dbReference>
<dbReference type="GO" id="GO:0005249">
    <property type="term" value="F:voltage-gated potassium channel activity"/>
    <property type="evidence" value="ECO:0007669"/>
    <property type="project" value="InterPro"/>
</dbReference>
<dbReference type="GO" id="GO:0006813">
    <property type="term" value="P:potassium ion transport"/>
    <property type="evidence" value="ECO:0000304"/>
    <property type="project" value="ProtInc"/>
</dbReference>
<dbReference type="GO" id="GO:1901379">
    <property type="term" value="P:regulation of potassium ion transmembrane transport"/>
    <property type="evidence" value="ECO:0000318"/>
    <property type="project" value="GO_Central"/>
</dbReference>
<dbReference type="CDD" id="cd19160">
    <property type="entry name" value="AKR_KCAB3B_AKR6A9-like"/>
    <property type="match status" value="1"/>
</dbReference>
<dbReference type="FunFam" id="3.20.20.100:FF:000001">
    <property type="entry name" value="voltage-gated potassium channel subunit beta-2 isoform X2"/>
    <property type="match status" value="1"/>
</dbReference>
<dbReference type="Gene3D" id="3.20.20.100">
    <property type="entry name" value="NADP-dependent oxidoreductase domain"/>
    <property type="match status" value="1"/>
</dbReference>
<dbReference type="InterPro" id="IPR005983">
    <property type="entry name" value="K_chnl_volt-dep_bsu_KCNAB"/>
</dbReference>
<dbReference type="InterPro" id="IPR005399">
    <property type="entry name" value="K_chnl_volt-dep_bsu_KCNAB-rel"/>
</dbReference>
<dbReference type="InterPro" id="IPR005402">
    <property type="entry name" value="K_chnl_volt-dep_bsu_KCNAB3"/>
</dbReference>
<dbReference type="InterPro" id="IPR023210">
    <property type="entry name" value="NADP_OxRdtase_dom"/>
</dbReference>
<dbReference type="InterPro" id="IPR036812">
    <property type="entry name" value="NADP_OxRdtase_dom_sf"/>
</dbReference>
<dbReference type="NCBIfam" id="TIGR01293">
    <property type="entry name" value="Kv_beta"/>
    <property type="match status" value="1"/>
</dbReference>
<dbReference type="PANTHER" id="PTHR43150">
    <property type="entry name" value="HYPERKINETIC, ISOFORM M"/>
    <property type="match status" value="1"/>
</dbReference>
<dbReference type="PANTHER" id="PTHR43150:SF3">
    <property type="entry name" value="VOLTAGE-GATED POTASSIUM CHANNEL SUBUNIT BETA-3"/>
    <property type="match status" value="1"/>
</dbReference>
<dbReference type="Pfam" id="PF00248">
    <property type="entry name" value="Aldo_ket_red"/>
    <property type="match status" value="1"/>
</dbReference>
<dbReference type="PRINTS" id="PR01580">
    <property type="entry name" value="KCNAB3CHANEL"/>
</dbReference>
<dbReference type="PRINTS" id="PR01577">
    <property type="entry name" value="KCNABCHANNEL"/>
</dbReference>
<dbReference type="SUPFAM" id="SSF51430">
    <property type="entry name" value="NAD(P)-linked oxidoreductase"/>
    <property type="match status" value="1"/>
</dbReference>
<keyword id="KW-0963">Cytoplasm</keyword>
<keyword id="KW-0407">Ion channel</keyword>
<keyword id="KW-0406">Ion transport</keyword>
<keyword id="KW-0521">NADP</keyword>
<keyword id="KW-0560">Oxidoreductase</keyword>
<keyword id="KW-0630">Potassium</keyword>
<keyword id="KW-0633">Potassium transport</keyword>
<keyword id="KW-1267">Proteomics identification</keyword>
<keyword id="KW-1185">Reference proteome</keyword>
<keyword id="KW-0813">Transport</keyword>
<keyword id="KW-0851">Voltage-gated channel</keyword>
<accession>O43448</accession>
<accession>Q4VAW0</accession>
<comment type="function">
    <text evidence="1 2 6">Regulatory subunit of the voltage-gated potassium (Kv) channels composed of pore-forming and potassium-conducting alpha subunits and of regulatory beta subunit (PubMed:9857044). The beta-3/KCNAB3 subunit may mediate closure of potassium channels (By similarity). Increases inactivation of Kv1.5/KCNA5 alpha subunit-containing channels (PubMed:9857044). May display nicotinamide adenine dinucleotide phosphate (NADPH)-dependent aldoketoreductase activity (By similarity). The binding of oxidized and reduced NADP(H) cofactors may be required for the regulation of potassium channel activity (By similarity).</text>
</comment>
<comment type="subunit">
    <text evidence="3">Forms heteromultimeric complex with alpha subunits (By similarity). Interacts with KCNA5 and KCNB2 (By similarity).</text>
</comment>
<comment type="interaction">
    <interactant intactId="EBI-12050557">
        <id>O43448</id>
    </interactant>
    <interactant intactId="EBI-746373">
        <id>O60547</id>
        <label>GMDS</label>
    </interactant>
    <organismsDiffer>false</organismsDiffer>
    <experiments>3</experiments>
</comment>
<comment type="interaction">
    <interactant intactId="EBI-12050557">
        <id>O43448</id>
    </interactant>
    <interactant intactId="EBI-948729">
        <id>Q13303</id>
        <label>KCNAB2</label>
    </interactant>
    <organismsDiffer>false</organismsDiffer>
    <experiments>2</experiments>
</comment>
<comment type="interaction">
    <interactant intactId="EBI-12050557">
        <id>O43448</id>
    </interactant>
    <interactant intactId="EBI-742388">
        <id>Q9H8W4</id>
        <label>PLEKHF2</label>
    </interactant>
    <organismsDiffer>false</organismsDiffer>
    <experiments>3</experiments>
</comment>
<comment type="subcellular location">
    <subcellularLocation>
        <location evidence="4">Cytoplasm</location>
    </subcellularLocation>
</comment>
<comment type="tissue specificity">
    <text evidence="6">Brain specific. Most prominent expression in cerebellum. Weaker signals detected in cortex, occipital lobe, frontal lobe and temporal lobe. Not detected in spinal cord, heart, lung, liver, kidney, pancreas, placenta and skeletal muscle.</text>
</comment>
<comment type="similarity">
    <text evidence="7">Belongs to the shaker potassium channel beta subunit family.</text>
</comment>
<name>KCAB3_HUMAN</name>
<organism>
    <name type="scientific">Homo sapiens</name>
    <name type="common">Human</name>
    <dbReference type="NCBI Taxonomy" id="9606"/>
    <lineage>
        <taxon>Eukaryota</taxon>
        <taxon>Metazoa</taxon>
        <taxon>Chordata</taxon>
        <taxon>Craniata</taxon>
        <taxon>Vertebrata</taxon>
        <taxon>Euteleostomi</taxon>
        <taxon>Mammalia</taxon>
        <taxon>Eutheria</taxon>
        <taxon>Euarchontoglires</taxon>
        <taxon>Primates</taxon>
        <taxon>Haplorrhini</taxon>
        <taxon>Catarrhini</taxon>
        <taxon>Hominidae</taxon>
        <taxon>Homo</taxon>
    </lineage>
</organism>
<evidence type="ECO:0000250" key="1">
    <source>
        <dbReference type="UniProtKB" id="P62483"/>
    </source>
</evidence>
<evidence type="ECO:0000250" key="2">
    <source>
        <dbReference type="UniProtKB" id="P63144"/>
    </source>
</evidence>
<evidence type="ECO:0000250" key="3">
    <source>
        <dbReference type="UniProtKB" id="P97382"/>
    </source>
</evidence>
<evidence type="ECO:0000250" key="4">
    <source>
        <dbReference type="UniProtKB" id="Q14722"/>
    </source>
</evidence>
<evidence type="ECO:0000256" key="5">
    <source>
        <dbReference type="SAM" id="MobiDB-lite"/>
    </source>
</evidence>
<evidence type="ECO:0000269" key="6">
    <source>
    </source>
</evidence>
<evidence type="ECO:0000305" key="7"/>
<evidence type="ECO:0000312" key="8">
    <source>
        <dbReference type="HGNC" id="HGNC:6230"/>
    </source>
</evidence>